<organism>
    <name type="scientific">Vibrio parahaemolyticus serotype O3:K6 (strain RIMD 2210633)</name>
    <dbReference type="NCBI Taxonomy" id="223926"/>
    <lineage>
        <taxon>Bacteria</taxon>
        <taxon>Pseudomonadati</taxon>
        <taxon>Pseudomonadota</taxon>
        <taxon>Gammaproteobacteria</taxon>
        <taxon>Vibrionales</taxon>
        <taxon>Vibrionaceae</taxon>
        <taxon>Vibrio</taxon>
    </lineage>
</organism>
<keyword id="KW-0067">ATP-binding</keyword>
<keyword id="KW-0436">Ligase</keyword>
<keyword id="KW-0460">Magnesium</keyword>
<keyword id="KW-0479">Metal-binding</keyword>
<keyword id="KW-0547">Nucleotide-binding</keyword>
<keyword id="KW-0816">Tricarboxylic acid cycle</keyword>
<evidence type="ECO:0000255" key="1">
    <source>
        <dbReference type="HAMAP-Rule" id="MF_00558"/>
    </source>
</evidence>
<dbReference type="EC" id="6.2.1.5" evidence="1"/>
<dbReference type="EMBL" id="BA000031">
    <property type="protein sequence ID" value="BAC59112.1"/>
    <property type="molecule type" value="Genomic_DNA"/>
</dbReference>
<dbReference type="RefSeq" id="NP_797228.1">
    <property type="nucleotide sequence ID" value="NC_004603.1"/>
</dbReference>
<dbReference type="RefSeq" id="WP_005455468.1">
    <property type="nucleotide sequence ID" value="NC_004603.1"/>
</dbReference>
<dbReference type="SMR" id="Q87RE8"/>
<dbReference type="GeneID" id="1188346"/>
<dbReference type="KEGG" id="vpa:VP0849"/>
<dbReference type="PATRIC" id="fig|223926.6.peg.805"/>
<dbReference type="eggNOG" id="COG0045">
    <property type="taxonomic scope" value="Bacteria"/>
</dbReference>
<dbReference type="HOGENOM" id="CLU_037430_0_2_6"/>
<dbReference type="UniPathway" id="UPA00223">
    <property type="reaction ID" value="UER00999"/>
</dbReference>
<dbReference type="Proteomes" id="UP000002493">
    <property type="component" value="Chromosome 1"/>
</dbReference>
<dbReference type="GO" id="GO:0005829">
    <property type="term" value="C:cytosol"/>
    <property type="evidence" value="ECO:0007669"/>
    <property type="project" value="TreeGrafter"/>
</dbReference>
<dbReference type="GO" id="GO:0042709">
    <property type="term" value="C:succinate-CoA ligase complex"/>
    <property type="evidence" value="ECO:0007669"/>
    <property type="project" value="TreeGrafter"/>
</dbReference>
<dbReference type="GO" id="GO:0005524">
    <property type="term" value="F:ATP binding"/>
    <property type="evidence" value="ECO:0007669"/>
    <property type="project" value="UniProtKB-UniRule"/>
</dbReference>
<dbReference type="GO" id="GO:0000287">
    <property type="term" value="F:magnesium ion binding"/>
    <property type="evidence" value="ECO:0007669"/>
    <property type="project" value="UniProtKB-UniRule"/>
</dbReference>
<dbReference type="GO" id="GO:0004775">
    <property type="term" value="F:succinate-CoA ligase (ADP-forming) activity"/>
    <property type="evidence" value="ECO:0007669"/>
    <property type="project" value="UniProtKB-UniRule"/>
</dbReference>
<dbReference type="GO" id="GO:0004776">
    <property type="term" value="F:succinate-CoA ligase (GDP-forming) activity"/>
    <property type="evidence" value="ECO:0007669"/>
    <property type="project" value="RHEA"/>
</dbReference>
<dbReference type="GO" id="GO:0006104">
    <property type="term" value="P:succinyl-CoA metabolic process"/>
    <property type="evidence" value="ECO:0007669"/>
    <property type="project" value="TreeGrafter"/>
</dbReference>
<dbReference type="GO" id="GO:0006099">
    <property type="term" value="P:tricarboxylic acid cycle"/>
    <property type="evidence" value="ECO:0007669"/>
    <property type="project" value="UniProtKB-UniRule"/>
</dbReference>
<dbReference type="FunFam" id="3.30.1490.20:FF:000002">
    <property type="entry name" value="Succinate--CoA ligase [ADP-forming] subunit beta"/>
    <property type="match status" value="1"/>
</dbReference>
<dbReference type="FunFam" id="3.30.470.20:FF:000002">
    <property type="entry name" value="Succinate--CoA ligase [ADP-forming] subunit beta"/>
    <property type="match status" value="1"/>
</dbReference>
<dbReference type="FunFam" id="3.40.50.261:FF:000001">
    <property type="entry name" value="Succinate--CoA ligase [ADP-forming] subunit beta"/>
    <property type="match status" value="1"/>
</dbReference>
<dbReference type="Gene3D" id="3.30.1490.20">
    <property type="entry name" value="ATP-grasp fold, A domain"/>
    <property type="match status" value="1"/>
</dbReference>
<dbReference type="Gene3D" id="3.30.470.20">
    <property type="entry name" value="ATP-grasp fold, B domain"/>
    <property type="match status" value="1"/>
</dbReference>
<dbReference type="Gene3D" id="3.40.50.261">
    <property type="entry name" value="Succinyl-CoA synthetase domains"/>
    <property type="match status" value="1"/>
</dbReference>
<dbReference type="HAMAP" id="MF_00558">
    <property type="entry name" value="Succ_CoA_beta"/>
    <property type="match status" value="1"/>
</dbReference>
<dbReference type="InterPro" id="IPR011761">
    <property type="entry name" value="ATP-grasp"/>
</dbReference>
<dbReference type="InterPro" id="IPR013650">
    <property type="entry name" value="ATP-grasp_succ-CoA_synth-type"/>
</dbReference>
<dbReference type="InterPro" id="IPR013815">
    <property type="entry name" value="ATP_grasp_subdomain_1"/>
</dbReference>
<dbReference type="InterPro" id="IPR017866">
    <property type="entry name" value="Succ-CoA_synthase_bsu_CS"/>
</dbReference>
<dbReference type="InterPro" id="IPR005811">
    <property type="entry name" value="SUCC_ACL_C"/>
</dbReference>
<dbReference type="InterPro" id="IPR005809">
    <property type="entry name" value="Succ_CoA_ligase-like_bsu"/>
</dbReference>
<dbReference type="InterPro" id="IPR016102">
    <property type="entry name" value="Succinyl-CoA_synth-like"/>
</dbReference>
<dbReference type="NCBIfam" id="NF001913">
    <property type="entry name" value="PRK00696.1"/>
    <property type="match status" value="1"/>
</dbReference>
<dbReference type="NCBIfam" id="TIGR01016">
    <property type="entry name" value="sucCoAbeta"/>
    <property type="match status" value="1"/>
</dbReference>
<dbReference type="PANTHER" id="PTHR11815:SF10">
    <property type="entry name" value="SUCCINATE--COA LIGASE [GDP-FORMING] SUBUNIT BETA, MITOCHONDRIAL"/>
    <property type="match status" value="1"/>
</dbReference>
<dbReference type="PANTHER" id="PTHR11815">
    <property type="entry name" value="SUCCINYL-COA SYNTHETASE BETA CHAIN"/>
    <property type="match status" value="1"/>
</dbReference>
<dbReference type="Pfam" id="PF08442">
    <property type="entry name" value="ATP-grasp_2"/>
    <property type="match status" value="1"/>
</dbReference>
<dbReference type="Pfam" id="PF00549">
    <property type="entry name" value="Ligase_CoA"/>
    <property type="match status" value="1"/>
</dbReference>
<dbReference type="PIRSF" id="PIRSF001554">
    <property type="entry name" value="SucCS_beta"/>
    <property type="match status" value="1"/>
</dbReference>
<dbReference type="SUPFAM" id="SSF56059">
    <property type="entry name" value="Glutathione synthetase ATP-binding domain-like"/>
    <property type="match status" value="1"/>
</dbReference>
<dbReference type="SUPFAM" id="SSF52210">
    <property type="entry name" value="Succinyl-CoA synthetase domains"/>
    <property type="match status" value="1"/>
</dbReference>
<dbReference type="PROSITE" id="PS50975">
    <property type="entry name" value="ATP_GRASP"/>
    <property type="match status" value="1"/>
</dbReference>
<dbReference type="PROSITE" id="PS01217">
    <property type="entry name" value="SUCCINYL_COA_LIG_3"/>
    <property type="match status" value="1"/>
</dbReference>
<comment type="function">
    <text evidence="1">Succinyl-CoA synthetase functions in the citric acid cycle (TCA), coupling the hydrolysis of succinyl-CoA to the synthesis of either ATP or GTP and thus represents the only step of substrate-level phosphorylation in the TCA. The beta subunit provides nucleotide specificity of the enzyme and binds the substrate succinate, while the binding sites for coenzyme A and phosphate are found in the alpha subunit.</text>
</comment>
<comment type="catalytic activity">
    <reaction evidence="1">
        <text>succinate + ATP + CoA = succinyl-CoA + ADP + phosphate</text>
        <dbReference type="Rhea" id="RHEA:17661"/>
        <dbReference type="ChEBI" id="CHEBI:30031"/>
        <dbReference type="ChEBI" id="CHEBI:30616"/>
        <dbReference type="ChEBI" id="CHEBI:43474"/>
        <dbReference type="ChEBI" id="CHEBI:57287"/>
        <dbReference type="ChEBI" id="CHEBI:57292"/>
        <dbReference type="ChEBI" id="CHEBI:456216"/>
        <dbReference type="EC" id="6.2.1.5"/>
    </reaction>
    <physiologicalReaction direction="right-to-left" evidence="1">
        <dbReference type="Rhea" id="RHEA:17663"/>
    </physiologicalReaction>
</comment>
<comment type="catalytic activity">
    <reaction evidence="1">
        <text>GTP + succinate + CoA = succinyl-CoA + GDP + phosphate</text>
        <dbReference type="Rhea" id="RHEA:22120"/>
        <dbReference type="ChEBI" id="CHEBI:30031"/>
        <dbReference type="ChEBI" id="CHEBI:37565"/>
        <dbReference type="ChEBI" id="CHEBI:43474"/>
        <dbReference type="ChEBI" id="CHEBI:57287"/>
        <dbReference type="ChEBI" id="CHEBI:57292"/>
        <dbReference type="ChEBI" id="CHEBI:58189"/>
    </reaction>
    <physiologicalReaction direction="right-to-left" evidence="1">
        <dbReference type="Rhea" id="RHEA:22122"/>
    </physiologicalReaction>
</comment>
<comment type="cofactor">
    <cofactor evidence="1">
        <name>Mg(2+)</name>
        <dbReference type="ChEBI" id="CHEBI:18420"/>
    </cofactor>
    <text evidence="1">Binds 1 Mg(2+) ion per subunit.</text>
</comment>
<comment type="pathway">
    <text evidence="1">Carbohydrate metabolism; tricarboxylic acid cycle; succinate from succinyl-CoA (ligase route): step 1/1.</text>
</comment>
<comment type="subunit">
    <text evidence="1">Heterotetramer of two alpha and two beta subunits.</text>
</comment>
<comment type="similarity">
    <text evidence="1">Belongs to the succinate/malate CoA ligase beta subunit family.</text>
</comment>
<gene>
    <name evidence="1" type="primary">sucC</name>
    <name type="ordered locus">VP0849</name>
</gene>
<sequence>MNLHEYQAKQLFAEFGLPVPEGYACDTPQEAFEAAGRISTAKKVVKCQVHAGGRGKAGGVELHDTKEGVKEFAQKWLGKNLVTYQTDANGQPVTKILVEEASNIANELYLGAVVDRASRKIVFMASTEGGVEIEKVAEETPELIHKAAIDPLVGPQAYQGRELAFKLGLEGDQIKQFVKIFMGLGTMFSQYDLALLEINPLVITAEGNLLCLDGKINIDSNALYRQPKLREMHDPSQEDEREAHAAQWELNYVALDGNVGCMVNGAGLAMGTMDIVNLHGGKPANFLDVGGGATKERVAEAFKIILSDDNVKAVLVNIFGGIVRCDMIAEGIIGAVKEVGVSVPVVVRLEGTNADLGREVLANSDVDIIAAESLTDAAQKVVAAAEAK</sequence>
<accession>Q87RE8</accession>
<reference key="1">
    <citation type="journal article" date="2003" name="Lancet">
        <title>Genome sequence of Vibrio parahaemolyticus: a pathogenic mechanism distinct from that of V. cholerae.</title>
        <authorList>
            <person name="Makino K."/>
            <person name="Oshima K."/>
            <person name="Kurokawa K."/>
            <person name="Yokoyama K."/>
            <person name="Uda T."/>
            <person name="Tagomori K."/>
            <person name="Iijima Y."/>
            <person name="Najima M."/>
            <person name="Nakano M."/>
            <person name="Yamashita A."/>
            <person name="Kubota Y."/>
            <person name="Kimura S."/>
            <person name="Yasunaga T."/>
            <person name="Honda T."/>
            <person name="Shinagawa H."/>
            <person name="Hattori M."/>
            <person name="Iida T."/>
        </authorList>
    </citation>
    <scope>NUCLEOTIDE SEQUENCE [LARGE SCALE GENOMIC DNA]</scope>
    <source>
        <strain>RIMD 2210633</strain>
    </source>
</reference>
<protein>
    <recommendedName>
        <fullName evidence="1">Succinate--CoA ligase [ADP-forming] subunit beta</fullName>
        <ecNumber evidence="1">6.2.1.5</ecNumber>
    </recommendedName>
    <alternativeName>
        <fullName evidence="1">Succinyl-CoA synthetase subunit beta</fullName>
        <shortName evidence="1">SCS-beta</shortName>
    </alternativeName>
</protein>
<feature type="chain" id="PRO_0000102873" description="Succinate--CoA ligase [ADP-forming] subunit beta">
    <location>
        <begin position="1"/>
        <end position="388"/>
    </location>
</feature>
<feature type="domain" description="ATP-grasp" evidence="1">
    <location>
        <begin position="9"/>
        <end position="244"/>
    </location>
</feature>
<feature type="binding site" evidence="1">
    <location>
        <position position="46"/>
    </location>
    <ligand>
        <name>ATP</name>
        <dbReference type="ChEBI" id="CHEBI:30616"/>
    </ligand>
</feature>
<feature type="binding site" evidence="1">
    <location>
        <begin position="53"/>
        <end position="55"/>
    </location>
    <ligand>
        <name>ATP</name>
        <dbReference type="ChEBI" id="CHEBI:30616"/>
    </ligand>
</feature>
<feature type="binding site" evidence="1">
    <location>
        <position position="99"/>
    </location>
    <ligand>
        <name>ATP</name>
        <dbReference type="ChEBI" id="CHEBI:30616"/>
    </ligand>
</feature>
<feature type="binding site" evidence="1">
    <location>
        <position position="102"/>
    </location>
    <ligand>
        <name>ATP</name>
        <dbReference type="ChEBI" id="CHEBI:30616"/>
    </ligand>
</feature>
<feature type="binding site" evidence="1">
    <location>
        <position position="107"/>
    </location>
    <ligand>
        <name>ATP</name>
        <dbReference type="ChEBI" id="CHEBI:30616"/>
    </ligand>
</feature>
<feature type="binding site" evidence="1">
    <location>
        <position position="199"/>
    </location>
    <ligand>
        <name>Mg(2+)</name>
        <dbReference type="ChEBI" id="CHEBI:18420"/>
    </ligand>
</feature>
<feature type="binding site" evidence="1">
    <location>
        <position position="213"/>
    </location>
    <ligand>
        <name>Mg(2+)</name>
        <dbReference type="ChEBI" id="CHEBI:18420"/>
    </ligand>
</feature>
<feature type="binding site" evidence="1">
    <location>
        <position position="264"/>
    </location>
    <ligand>
        <name>substrate</name>
        <note>ligand shared with subunit alpha</note>
    </ligand>
</feature>
<feature type="binding site" evidence="1">
    <location>
        <begin position="321"/>
        <end position="323"/>
    </location>
    <ligand>
        <name>substrate</name>
        <note>ligand shared with subunit alpha</note>
    </ligand>
</feature>
<name>SUCC_VIBPA</name>
<proteinExistence type="inferred from homology"/>